<feature type="chain" id="PRO_0000199322" description="C-1-tetrahydrofolate synthase, cytoplasmic">
    <location>
        <begin position="1"/>
        <end position="935"/>
    </location>
</feature>
<feature type="initiator methionine" description="Removed; alternate" evidence="2">
    <location>
        <position position="1"/>
    </location>
</feature>
<feature type="chain" id="PRO_0000423281" description="C-1-tetrahydrofolate synthase, cytoplasmic, N-terminally processed">
    <location>
        <begin position="2"/>
        <end position="935"/>
    </location>
</feature>
<feature type="region of interest" description="Methylenetetrahydrofolate dehydrogenase and methenyltetrahydrofolate cyclohydrolase (D/C) domain" evidence="2">
    <location>
        <begin position="2"/>
        <end position="291"/>
    </location>
</feature>
<feature type="region of interest" description="Formyltetrahydrofolate synthetase domain" evidence="2">
    <location>
        <begin position="310"/>
        <end position="935"/>
    </location>
</feature>
<feature type="active site" evidence="2">
    <location>
        <position position="56"/>
    </location>
</feature>
<feature type="binding site" evidence="2">
    <location>
        <begin position="52"/>
        <end position="56"/>
    </location>
    <ligand>
        <name>substrate</name>
    </ligand>
</feature>
<feature type="binding site" evidence="2">
    <location>
        <begin position="99"/>
        <end position="101"/>
    </location>
    <ligand>
        <name>substrate</name>
    </ligand>
</feature>
<feature type="binding site" evidence="2">
    <location>
        <begin position="172"/>
        <end position="174"/>
    </location>
    <ligand>
        <name>NADP(+)</name>
        <dbReference type="ChEBI" id="CHEBI:58349"/>
    </ligand>
</feature>
<feature type="binding site" evidence="2">
    <location>
        <position position="197"/>
    </location>
    <ligand>
        <name>NADP(+)</name>
        <dbReference type="ChEBI" id="CHEBI:58349"/>
    </ligand>
</feature>
<feature type="binding site" evidence="2">
    <location>
        <begin position="272"/>
        <end position="276"/>
    </location>
    <ligand>
        <name>substrate</name>
    </ligand>
</feature>
<feature type="binding site" evidence="1">
    <location>
        <begin position="380"/>
        <end position="387"/>
    </location>
    <ligand>
        <name>ATP</name>
        <dbReference type="ChEBI" id="CHEBI:30616"/>
    </ligand>
</feature>
<feature type="modified residue" description="N-acetylmethionine" evidence="2">
    <location>
        <position position="1"/>
    </location>
</feature>
<feature type="modified residue" description="Phosphoserine" evidence="2">
    <location>
        <position position="318"/>
    </location>
</feature>
<feature type="modified residue" description="Phosphoserine" evidence="2">
    <location>
        <position position="413"/>
    </location>
</feature>
<feature type="modified residue" description="Phosphoserine" evidence="2">
    <location>
        <position position="490"/>
    </location>
</feature>
<feature type="sequence conflict" description="In Ref. 3; AAH08523." evidence="4" ref="3">
    <original>H</original>
    <variation>Y</variation>
    <location>
        <position position="365"/>
    </location>
</feature>
<feature type="sequence conflict" description="In Ref. 3; AAH08523." evidence="4" ref="3">
    <original>A</original>
    <variation>T</variation>
    <location>
        <position position="610"/>
    </location>
</feature>
<keyword id="KW-0007">Acetylation</keyword>
<keyword id="KW-0028">Amino-acid biosynthesis</keyword>
<keyword id="KW-0067">ATP-binding</keyword>
<keyword id="KW-0963">Cytoplasm</keyword>
<keyword id="KW-0903">Direct protein sequencing</keyword>
<keyword id="KW-0368">Histidine biosynthesis</keyword>
<keyword id="KW-0378">Hydrolase</keyword>
<keyword id="KW-0436">Ligase</keyword>
<keyword id="KW-0486">Methionine biosynthesis</keyword>
<keyword id="KW-0511">Multifunctional enzyme</keyword>
<keyword id="KW-0521">NADP</keyword>
<keyword id="KW-0547">Nucleotide-binding</keyword>
<keyword id="KW-0554">One-carbon metabolism</keyword>
<keyword id="KW-0560">Oxidoreductase</keyword>
<keyword id="KW-0597">Phosphoprotein</keyword>
<keyword id="KW-0658">Purine biosynthesis</keyword>
<keyword id="KW-1185">Reference proteome</keyword>
<proteinExistence type="evidence at protein level"/>
<gene>
    <name type="primary">Mthfd1</name>
</gene>
<name>C1TC_MOUSE</name>
<comment type="function">
    <text evidence="3">Trifunctional enzyme that catalyzes the interconversion of three forms of one-carbon-substituted tetrahydrofolate: (6R)-5,10-methylene-5,6,7,8-tetrahydrofolate, 5,10-methenyltetrahydrofolate and (6S)-10-formyltetrahydrofolate. These derivatives of tetrahydrofolate are differentially required in nucleotide and amino acid biosynthesis, (6S)-10-formyltetrahydrofolate being required for purine biosynthesis while (6R)-5,10-methylene-5,6,7,8-tetrahydrofolate is used for serine and methionine biosynthesis for instance.</text>
</comment>
<comment type="catalytic activity">
    <reaction evidence="3">
        <text>(6R)-5,10-methylene-5,6,7,8-tetrahydrofolate + NADP(+) = (6R)-5,10-methenyltetrahydrofolate + NADPH</text>
        <dbReference type="Rhea" id="RHEA:22812"/>
        <dbReference type="ChEBI" id="CHEBI:15636"/>
        <dbReference type="ChEBI" id="CHEBI:57455"/>
        <dbReference type="ChEBI" id="CHEBI:57783"/>
        <dbReference type="ChEBI" id="CHEBI:58349"/>
        <dbReference type="EC" id="1.5.1.5"/>
    </reaction>
</comment>
<comment type="catalytic activity">
    <reaction evidence="2">
        <text>(6R)-5,10-methenyltetrahydrofolate + H2O = (6R)-10-formyltetrahydrofolate + H(+)</text>
        <dbReference type="Rhea" id="RHEA:23700"/>
        <dbReference type="ChEBI" id="CHEBI:15377"/>
        <dbReference type="ChEBI" id="CHEBI:15378"/>
        <dbReference type="ChEBI" id="CHEBI:57455"/>
        <dbReference type="ChEBI" id="CHEBI:195366"/>
        <dbReference type="EC" id="3.5.4.9"/>
    </reaction>
</comment>
<comment type="catalytic activity">
    <reaction evidence="3">
        <text>(6S)-5,6,7,8-tetrahydrofolate + formate + ATP = (6R)-10-formyltetrahydrofolate + ADP + phosphate</text>
        <dbReference type="Rhea" id="RHEA:20221"/>
        <dbReference type="ChEBI" id="CHEBI:15740"/>
        <dbReference type="ChEBI" id="CHEBI:30616"/>
        <dbReference type="ChEBI" id="CHEBI:43474"/>
        <dbReference type="ChEBI" id="CHEBI:57453"/>
        <dbReference type="ChEBI" id="CHEBI:195366"/>
        <dbReference type="ChEBI" id="CHEBI:456216"/>
        <dbReference type="EC" id="6.3.4.3"/>
    </reaction>
</comment>
<comment type="pathway">
    <text evidence="3">One-carbon metabolism; tetrahydrofolate interconversion.</text>
</comment>
<comment type="subunit">
    <text evidence="2">Homodimer.</text>
</comment>
<comment type="subcellular location">
    <subcellularLocation>
        <location evidence="5">Cytoplasm</location>
    </subcellularLocation>
</comment>
<comment type="domain">
    <text evidence="2">The N-terminal methylenetetrahydrofolate dehydrogenase and methenyltetrahydrofolate cyclohydrolase (D/C) domain carries both the methylenetetrahydrofolate dehydrogenase and methenyltetrahydrofolate cyclohydrolase activities.</text>
</comment>
<comment type="domain">
    <text evidence="2">The larger C-terminal formyltetrahydrofolate synthetase domain carries a third formyltetrahydrofolate synthetase activity.</text>
</comment>
<comment type="similarity">
    <text evidence="4">In the N-terminal section; belongs to the tetrahydrofolate dehydrogenase/cyclohydrolase family.</text>
</comment>
<comment type="similarity">
    <text evidence="4">In the C-terminal section; belongs to the formate--tetrahydrofolate ligase family.</text>
</comment>
<protein>
    <recommendedName>
        <fullName evidence="5">C-1-tetrahydrofolate synthase, cytoplasmic</fullName>
        <shortName>C1-THF synthase</shortName>
    </recommendedName>
    <domain>
        <recommendedName>
            <fullName evidence="5">Methylenetetrahydrofolate dehydrogenase</fullName>
            <ecNumber evidence="3">1.5.1.5</ecNumber>
        </recommendedName>
    </domain>
    <domain>
        <recommendedName>
            <fullName evidence="2">Methenyltetrahydrofolate cyclohydrolase</fullName>
            <ecNumber evidence="2">3.5.4.9</ecNumber>
        </recommendedName>
    </domain>
    <domain>
        <recommendedName>
            <fullName evidence="5">Formyltetrahydrofolate synthetase</fullName>
            <ecNumber evidence="3">6.3.4.3</ecNumber>
        </recommendedName>
    </domain>
    <component>
        <recommendedName>
            <fullName>C-1-tetrahydrofolate synthase, cytoplasmic, N-terminally processed</fullName>
        </recommendedName>
    </component>
</protein>
<dbReference type="EC" id="1.5.1.5" evidence="3"/>
<dbReference type="EC" id="3.5.4.9" evidence="2"/>
<dbReference type="EC" id="6.3.4.3" evidence="3"/>
<dbReference type="EMBL" id="AF364579">
    <property type="protein sequence ID" value="AAL99692.1"/>
    <property type="molecule type" value="mRNA"/>
</dbReference>
<dbReference type="EMBL" id="AF364591">
    <property type="protein sequence ID" value="AAL99693.1"/>
    <property type="molecule type" value="Genomic_DNA"/>
</dbReference>
<dbReference type="EMBL" id="AF364580">
    <property type="protein sequence ID" value="AAL99693.1"/>
    <property type="status" value="JOINED"/>
    <property type="molecule type" value="Genomic_DNA"/>
</dbReference>
<dbReference type="EMBL" id="AF364581">
    <property type="protein sequence ID" value="AAL99693.1"/>
    <property type="status" value="JOINED"/>
    <property type="molecule type" value="Genomic_DNA"/>
</dbReference>
<dbReference type="EMBL" id="AF364582">
    <property type="protein sequence ID" value="AAL99693.1"/>
    <property type="status" value="JOINED"/>
    <property type="molecule type" value="Genomic_DNA"/>
</dbReference>
<dbReference type="EMBL" id="AF364583">
    <property type="protein sequence ID" value="AAL99693.1"/>
    <property type="status" value="JOINED"/>
    <property type="molecule type" value="Genomic_DNA"/>
</dbReference>
<dbReference type="EMBL" id="AF364584">
    <property type="protein sequence ID" value="AAL99693.1"/>
    <property type="status" value="JOINED"/>
    <property type="molecule type" value="Genomic_DNA"/>
</dbReference>
<dbReference type="EMBL" id="AF364585">
    <property type="protein sequence ID" value="AAL99693.1"/>
    <property type="status" value="JOINED"/>
    <property type="molecule type" value="Genomic_DNA"/>
</dbReference>
<dbReference type="EMBL" id="AF364586">
    <property type="protein sequence ID" value="AAL99693.1"/>
    <property type="status" value="JOINED"/>
    <property type="molecule type" value="Genomic_DNA"/>
</dbReference>
<dbReference type="EMBL" id="AF364587">
    <property type="protein sequence ID" value="AAL99693.1"/>
    <property type="status" value="JOINED"/>
    <property type="molecule type" value="Genomic_DNA"/>
</dbReference>
<dbReference type="EMBL" id="AF364588">
    <property type="protein sequence ID" value="AAL99693.1"/>
    <property type="status" value="JOINED"/>
    <property type="molecule type" value="Genomic_DNA"/>
</dbReference>
<dbReference type="EMBL" id="AF364589">
    <property type="protein sequence ID" value="AAL99693.1"/>
    <property type="status" value="JOINED"/>
    <property type="molecule type" value="Genomic_DNA"/>
</dbReference>
<dbReference type="EMBL" id="AF364590">
    <property type="protein sequence ID" value="AAL99693.1"/>
    <property type="status" value="JOINED"/>
    <property type="molecule type" value="Genomic_DNA"/>
</dbReference>
<dbReference type="EMBL" id="AK088700">
    <property type="protein sequence ID" value="BAC40513.1"/>
    <property type="molecule type" value="mRNA"/>
</dbReference>
<dbReference type="EMBL" id="BC008523">
    <property type="protein sequence ID" value="AAH08523.1"/>
    <property type="molecule type" value="mRNA"/>
</dbReference>
<dbReference type="CCDS" id="CCDS25990.1"/>
<dbReference type="RefSeq" id="NP_620084.2">
    <property type="nucleotide sequence ID" value="NM_138745.2"/>
</dbReference>
<dbReference type="SMR" id="Q922D8"/>
<dbReference type="BioGRID" id="223871">
    <property type="interactions" value="25"/>
</dbReference>
<dbReference type="FunCoup" id="Q922D8">
    <property type="interactions" value="2774"/>
</dbReference>
<dbReference type="IntAct" id="Q922D8">
    <property type="interactions" value="4"/>
</dbReference>
<dbReference type="MINT" id="Q922D8"/>
<dbReference type="STRING" id="10090.ENSMUSP00000021443"/>
<dbReference type="ChEMBL" id="CHEMBL3137"/>
<dbReference type="GlyGen" id="Q922D8">
    <property type="glycosylation" value="3 sites, 1 O-linked glycan (1 site)"/>
</dbReference>
<dbReference type="iPTMnet" id="Q922D8"/>
<dbReference type="PhosphoSitePlus" id="Q922D8"/>
<dbReference type="SwissPalm" id="Q922D8"/>
<dbReference type="REPRODUCTION-2DPAGE" id="Q922D8"/>
<dbReference type="jPOST" id="Q922D8"/>
<dbReference type="PaxDb" id="10090-ENSMUSP00000021443"/>
<dbReference type="PeptideAtlas" id="Q922D8"/>
<dbReference type="ProteomicsDB" id="273855"/>
<dbReference type="Pumba" id="Q922D8"/>
<dbReference type="Antibodypedia" id="52">
    <property type="antibodies" value="171 antibodies from 29 providers"/>
</dbReference>
<dbReference type="DNASU" id="108156"/>
<dbReference type="Ensembl" id="ENSMUST00000021443.7">
    <property type="protein sequence ID" value="ENSMUSP00000021443.6"/>
    <property type="gene ID" value="ENSMUSG00000021048.8"/>
</dbReference>
<dbReference type="GeneID" id="108156"/>
<dbReference type="KEGG" id="mmu:108156"/>
<dbReference type="UCSC" id="uc007nxz.2">
    <property type="organism name" value="mouse"/>
</dbReference>
<dbReference type="AGR" id="MGI:1342005"/>
<dbReference type="CTD" id="4522"/>
<dbReference type="MGI" id="MGI:1342005">
    <property type="gene designation" value="Mthfd1"/>
</dbReference>
<dbReference type="VEuPathDB" id="HostDB:ENSMUSG00000021048"/>
<dbReference type="eggNOG" id="KOG4230">
    <property type="taxonomic scope" value="Eukaryota"/>
</dbReference>
<dbReference type="GeneTree" id="ENSGT00940000154746"/>
<dbReference type="HOGENOM" id="CLU_003601_2_0_1"/>
<dbReference type="InParanoid" id="Q922D8"/>
<dbReference type="OMA" id="QPIMFRR"/>
<dbReference type="OrthoDB" id="1845775at2759"/>
<dbReference type="PhylomeDB" id="Q922D8"/>
<dbReference type="TreeFam" id="TF300623"/>
<dbReference type="BRENDA" id="6.3.4.3">
    <property type="organism ID" value="3474"/>
</dbReference>
<dbReference type="Reactome" id="R-MMU-196757">
    <property type="pathway name" value="Metabolism of folate and pterines"/>
</dbReference>
<dbReference type="UniPathway" id="UPA00193"/>
<dbReference type="BioGRID-ORCS" id="108156">
    <property type="hits" value="23 hits in 79 CRISPR screens"/>
</dbReference>
<dbReference type="CD-CODE" id="CE726F99">
    <property type="entry name" value="Postsynaptic density"/>
</dbReference>
<dbReference type="ChiTaRS" id="Mthfd1">
    <property type="organism name" value="mouse"/>
</dbReference>
<dbReference type="PRO" id="PR:Q922D8"/>
<dbReference type="Proteomes" id="UP000000589">
    <property type="component" value="Chromosome 12"/>
</dbReference>
<dbReference type="RNAct" id="Q922D8">
    <property type="molecule type" value="protein"/>
</dbReference>
<dbReference type="Bgee" id="ENSMUSG00000021048">
    <property type="expression patterns" value="Expressed in paneth cell and 286 other cell types or tissues"/>
</dbReference>
<dbReference type="ExpressionAtlas" id="Q922D8">
    <property type="expression patterns" value="baseline and differential"/>
</dbReference>
<dbReference type="GO" id="GO:0005829">
    <property type="term" value="C:cytosol"/>
    <property type="evidence" value="ECO:0000314"/>
    <property type="project" value="MGI"/>
</dbReference>
<dbReference type="GO" id="GO:0005739">
    <property type="term" value="C:mitochondrion"/>
    <property type="evidence" value="ECO:0007005"/>
    <property type="project" value="MGI"/>
</dbReference>
<dbReference type="GO" id="GO:0005524">
    <property type="term" value="F:ATP binding"/>
    <property type="evidence" value="ECO:0007669"/>
    <property type="project" value="UniProtKB-KW"/>
</dbReference>
<dbReference type="GO" id="GO:0004329">
    <property type="term" value="F:formate-tetrahydrofolate ligase activity"/>
    <property type="evidence" value="ECO:0000315"/>
    <property type="project" value="UniProtKB"/>
</dbReference>
<dbReference type="GO" id="GO:0004477">
    <property type="term" value="F:methenyltetrahydrofolate cyclohydrolase activity"/>
    <property type="evidence" value="ECO:0000316"/>
    <property type="project" value="MGI"/>
</dbReference>
<dbReference type="GO" id="GO:0004487">
    <property type="term" value="F:methylenetetrahydrofolate dehydrogenase (NAD+) activity"/>
    <property type="evidence" value="ECO:0000314"/>
    <property type="project" value="BHF-UCL"/>
</dbReference>
<dbReference type="GO" id="GO:0004488">
    <property type="term" value="F:methylenetetrahydrofolate dehydrogenase (NADP+) activity"/>
    <property type="evidence" value="ECO:0000315"/>
    <property type="project" value="UniProtKB"/>
</dbReference>
<dbReference type="GO" id="GO:0009257">
    <property type="term" value="P:10-formyltetrahydrofolate biosynthetic process"/>
    <property type="evidence" value="ECO:0000315"/>
    <property type="project" value="BHF-UCL"/>
</dbReference>
<dbReference type="GO" id="GO:0046655">
    <property type="term" value="P:folic acid metabolic process"/>
    <property type="evidence" value="ECO:0000315"/>
    <property type="project" value="BHF-UCL"/>
</dbReference>
<dbReference type="GO" id="GO:0007507">
    <property type="term" value="P:heart development"/>
    <property type="evidence" value="ECO:0000315"/>
    <property type="project" value="BHF-UCL"/>
</dbReference>
<dbReference type="GO" id="GO:0000105">
    <property type="term" value="P:L-histidine biosynthetic process"/>
    <property type="evidence" value="ECO:0007669"/>
    <property type="project" value="UniProtKB-KW"/>
</dbReference>
<dbReference type="GO" id="GO:0009086">
    <property type="term" value="P:methionine biosynthetic process"/>
    <property type="evidence" value="ECO:0007669"/>
    <property type="project" value="UniProtKB-KW"/>
</dbReference>
<dbReference type="GO" id="GO:0006555">
    <property type="term" value="P:methionine metabolic process"/>
    <property type="evidence" value="ECO:0000315"/>
    <property type="project" value="BHF-UCL"/>
</dbReference>
<dbReference type="GO" id="GO:0001843">
    <property type="term" value="P:neural tube closure"/>
    <property type="evidence" value="ECO:0000315"/>
    <property type="project" value="BHF-UCL"/>
</dbReference>
<dbReference type="GO" id="GO:0001780">
    <property type="term" value="P:neutrophil homeostasis"/>
    <property type="evidence" value="ECO:0000315"/>
    <property type="project" value="BHF-UCL"/>
</dbReference>
<dbReference type="GO" id="GO:0006164">
    <property type="term" value="P:purine nucleotide biosynthetic process"/>
    <property type="evidence" value="ECO:0000315"/>
    <property type="project" value="BHF-UCL"/>
</dbReference>
<dbReference type="GO" id="GO:0009152">
    <property type="term" value="P:purine ribonucleotide biosynthetic process"/>
    <property type="evidence" value="ECO:0000315"/>
    <property type="project" value="UniProtKB"/>
</dbReference>
<dbReference type="GO" id="GO:0061053">
    <property type="term" value="P:somite development"/>
    <property type="evidence" value="ECO:0000315"/>
    <property type="project" value="BHF-UCL"/>
</dbReference>
<dbReference type="GO" id="GO:0035999">
    <property type="term" value="P:tetrahydrofolate interconversion"/>
    <property type="evidence" value="ECO:0000314"/>
    <property type="project" value="MGI"/>
</dbReference>
<dbReference type="GO" id="GO:0019346">
    <property type="term" value="P:transsulfuration"/>
    <property type="evidence" value="ECO:0000315"/>
    <property type="project" value="BHF-UCL"/>
</dbReference>
<dbReference type="CDD" id="cd00477">
    <property type="entry name" value="FTHFS"/>
    <property type="match status" value="1"/>
</dbReference>
<dbReference type="CDD" id="cd01080">
    <property type="entry name" value="NAD_bind_m-THF_DH_Cyclohyd"/>
    <property type="match status" value="1"/>
</dbReference>
<dbReference type="FunFam" id="3.40.50.720:FF:000006">
    <property type="entry name" value="Bifunctional protein FolD"/>
    <property type="match status" value="1"/>
</dbReference>
<dbReference type="FunFam" id="3.40.50.300:FF:000245">
    <property type="entry name" value="C-1-tetrahydrofolate synthase, cytoplasmic"/>
    <property type="match status" value="1"/>
</dbReference>
<dbReference type="FunFam" id="3.40.50.300:FF:001123">
    <property type="entry name" value="C-1-tetrahydrofolate synthase, cytoplasmic isoform X2"/>
    <property type="match status" value="1"/>
</dbReference>
<dbReference type="FunFam" id="3.40.50.10860:FF:000005">
    <property type="entry name" value="C-1-tetrahydrofolate synthase, cytoplasmic, putative"/>
    <property type="match status" value="1"/>
</dbReference>
<dbReference type="FunFam" id="1.10.8.770:FF:000001">
    <property type="entry name" value="Methylenetetrahydrofolate dehydrogenase (NADP+ dependent) 1 like"/>
    <property type="match status" value="1"/>
</dbReference>
<dbReference type="FunFam" id="3.10.410.10:FF:000001">
    <property type="entry name" value="Putative formate--tetrahydrofolate ligase"/>
    <property type="match status" value="1"/>
</dbReference>
<dbReference type="Gene3D" id="3.30.1510.10">
    <property type="entry name" value="Domain 2, N(10)-formyltetrahydrofolate synthetase"/>
    <property type="match status" value="1"/>
</dbReference>
<dbReference type="Gene3D" id="3.10.410.10">
    <property type="entry name" value="Formyltetrahydrofolate synthetase, domain 3"/>
    <property type="match status" value="1"/>
</dbReference>
<dbReference type="Gene3D" id="3.40.50.10860">
    <property type="entry name" value="Leucine Dehydrogenase, chain A, domain 1"/>
    <property type="match status" value="1"/>
</dbReference>
<dbReference type="Gene3D" id="3.40.50.720">
    <property type="entry name" value="NAD(P)-binding Rossmann-like Domain"/>
    <property type="match status" value="1"/>
</dbReference>
<dbReference type="Gene3D" id="3.40.50.300">
    <property type="entry name" value="P-loop containing nucleotide triphosphate hydrolases"/>
    <property type="match status" value="2"/>
</dbReference>
<dbReference type="HAMAP" id="MF_01543">
    <property type="entry name" value="FTHFS"/>
    <property type="match status" value="1"/>
</dbReference>
<dbReference type="HAMAP" id="MF_01576">
    <property type="entry name" value="THF_DHG_CYH"/>
    <property type="match status" value="1"/>
</dbReference>
<dbReference type="InterPro" id="IPR046346">
    <property type="entry name" value="Aminoacid_DH-like_N_sf"/>
</dbReference>
<dbReference type="InterPro" id="IPR000559">
    <property type="entry name" value="Formate_THF_ligase"/>
</dbReference>
<dbReference type="InterPro" id="IPR020628">
    <property type="entry name" value="Formate_THF_ligase_CS"/>
</dbReference>
<dbReference type="InterPro" id="IPR036291">
    <property type="entry name" value="NAD(P)-bd_dom_sf"/>
</dbReference>
<dbReference type="InterPro" id="IPR027417">
    <property type="entry name" value="P-loop_NTPase"/>
</dbReference>
<dbReference type="InterPro" id="IPR000672">
    <property type="entry name" value="THF_DH/CycHdrlase"/>
</dbReference>
<dbReference type="InterPro" id="IPR020630">
    <property type="entry name" value="THF_DH/CycHdrlase_cat_dom"/>
</dbReference>
<dbReference type="InterPro" id="IPR020867">
    <property type="entry name" value="THF_DH/CycHdrlase_CS"/>
</dbReference>
<dbReference type="InterPro" id="IPR020631">
    <property type="entry name" value="THF_DH/CycHdrlase_NAD-bd_dom"/>
</dbReference>
<dbReference type="PANTHER" id="PTHR48099:SF1">
    <property type="entry name" value="C-1-TETRAHYDROFOLATE SYNTHASE, CYTOPLASMIC"/>
    <property type="match status" value="1"/>
</dbReference>
<dbReference type="PANTHER" id="PTHR48099">
    <property type="entry name" value="C-1-TETRAHYDROFOLATE SYNTHASE, CYTOPLASMIC-RELATED"/>
    <property type="match status" value="1"/>
</dbReference>
<dbReference type="Pfam" id="PF01268">
    <property type="entry name" value="FTHFS"/>
    <property type="match status" value="1"/>
</dbReference>
<dbReference type="Pfam" id="PF00763">
    <property type="entry name" value="THF_DHG_CYH"/>
    <property type="match status" value="1"/>
</dbReference>
<dbReference type="Pfam" id="PF02882">
    <property type="entry name" value="THF_DHG_CYH_C"/>
    <property type="match status" value="1"/>
</dbReference>
<dbReference type="PRINTS" id="PR00085">
    <property type="entry name" value="THFDHDRGNASE"/>
</dbReference>
<dbReference type="SUPFAM" id="SSF53223">
    <property type="entry name" value="Aminoacid dehydrogenase-like, N-terminal domain"/>
    <property type="match status" value="1"/>
</dbReference>
<dbReference type="SUPFAM" id="SSF51735">
    <property type="entry name" value="NAD(P)-binding Rossmann-fold domains"/>
    <property type="match status" value="1"/>
</dbReference>
<dbReference type="SUPFAM" id="SSF52540">
    <property type="entry name" value="P-loop containing nucleoside triphosphate hydrolases"/>
    <property type="match status" value="1"/>
</dbReference>
<dbReference type="PROSITE" id="PS00721">
    <property type="entry name" value="FTHFS_1"/>
    <property type="match status" value="1"/>
</dbReference>
<dbReference type="PROSITE" id="PS00722">
    <property type="entry name" value="FTHFS_2"/>
    <property type="match status" value="1"/>
</dbReference>
<dbReference type="PROSITE" id="PS00766">
    <property type="entry name" value="THF_DHG_CYH_1"/>
    <property type="match status" value="1"/>
</dbReference>
<dbReference type="PROSITE" id="PS00767">
    <property type="entry name" value="THF_DHG_CYH_2"/>
    <property type="match status" value="1"/>
</dbReference>
<reference key="1">
    <citation type="journal article" date="2002" name="Arch. Biochem. Biophys.">
        <title>Mammalian mitochondrial methylenetetrahydrofolate dehydrogenase-cyclohydrolase derived from a trifunctional methylenetetrahydrofolate dehydrogenase-cyclohydrolase-synthetase.</title>
        <authorList>
            <person name="Patel H."/>
            <person name="Christensen K.E."/>
            <person name="Mejia N."/>
            <person name="MacKenzie R.E."/>
        </authorList>
    </citation>
    <scope>NUCLEOTIDE SEQUENCE [GENOMIC DNA / MRNA]</scope>
    <source>
        <strain>129/SvJ</strain>
    </source>
</reference>
<reference key="2">
    <citation type="journal article" date="2005" name="Science">
        <title>The transcriptional landscape of the mammalian genome.</title>
        <authorList>
            <person name="Carninci P."/>
            <person name="Kasukawa T."/>
            <person name="Katayama S."/>
            <person name="Gough J."/>
            <person name="Frith M.C."/>
            <person name="Maeda N."/>
            <person name="Oyama R."/>
            <person name="Ravasi T."/>
            <person name="Lenhard B."/>
            <person name="Wells C."/>
            <person name="Kodzius R."/>
            <person name="Shimokawa K."/>
            <person name="Bajic V.B."/>
            <person name="Brenner S.E."/>
            <person name="Batalov S."/>
            <person name="Forrest A.R."/>
            <person name="Zavolan M."/>
            <person name="Davis M.J."/>
            <person name="Wilming L.G."/>
            <person name="Aidinis V."/>
            <person name="Allen J.E."/>
            <person name="Ambesi-Impiombato A."/>
            <person name="Apweiler R."/>
            <person name="Aturaliya R.N."/>
            <person name="Bailey T.L."/>
            <person name="Bansal M."/>
            <person name="Baxter L."/>
            <person name="Beisel K.W."/>
            <person name="Bersano T."/>
            <person name="Bono H."/>
            <person name="Chalk A.M."/>
            <person name="Chiu K.P."/>
            <person name="Choudhary V."/>
            <person name="Christoffels A."/>
            <person name="Clutterbuck D.R."/>
            <person name="Crowe M.L."/>
            <person name="Dalla E."/>
            <person name="Dalrymple B.P."/>
            <person name="de Bono B."/>
            <person name="Della Gatta G."/>
            <person name="di Bernardo D."/>
            <person name="Down T."/>
            <person name="Engstrom P."/>
            <person name="Fagiolini M."/>
            <person name="Faulkner G."/>
            <person name="Fletcher C.F."/>
            <person name="Fukushima T."/>
            <person name="Furuno M."/>
            <person name="Futaki S."/>
            <person name="Gariboldi M."/>
            <person name="Georgii-Hemming P."/>
            <person name="Gingeras T.R."/>
            <person name="Gojobori T."/>
            <person name="Green R.E."/>
            <person name="Gustincich S."/>
            <person name="Harbers M."/>
            <person name="Hayashi Y."/>
            <person name="Hensch T.K."/>
            <person name="Hirokawa N."/>
            <person name="Hill D."/>
            <person name="Huminiecki L."/>
            <person name="Iacono M."/>
            <person name="Ikeo K."/>
            <person name="Iwama A."/>
            <person name="Ishikawa T."/>
            <person name="Jakt M."/>
            <person name="Kanapin A."/>
            <person name="Katoh M."/>
            <person name="Kawasawa Y."/>
            <person name="Kelso J."/>
            <person name="Kitamura H."/>
            <person name="Kitano H."/>
            <person name="Kollias G."/>
            <person name="Krishnan S.P."/>
            <person name="Kruger A."/>
            <person name="Kummerfeld S.K."/>
            <person name="Kurochkin I.V."/>
            <person name="Lareau L.F."/>
            <person name="Lazarevic D."/>
            <person name="Lipovich L."/>
            <person name="Liu J."/>
            <person name="Liuni S."/>
            <person name="McWilliam S."/>
            <person name="Madan Babu M."/>
            <person name="Madera M."/>
            <person name="Marchionni L."/>
            <person name="Matsuda H."/>
            <person name="Matsuzawa S."/>
            <person name="Miki H."/>
            <person name="Mignone F."/>
            <person name="Miyake S."/>
            <person name="Morris K."/>
            <person name="Mottagui-Tabar S."/>
            <person name="Mulder N."/>
            <person name="Nakano N."/>
            <person name="Nakauchi H."/>
            <person name="Ng P."/>
            <person name="Nilsson R."/>
            <person name="Nishiguchi S."/>
            <person name="Nishikawa S."/>
            <person name="Nori F."/>
            <person name="Ohara O."/>
            <person name="Okazaki Y."/>
            <person name="Orlando V."/>
            <person name="Pang K.C."/>
            <person name="Pavan W.J."/>
            <person name="Pavesi G."/>
            <person name="Pesole G."/>
            <person name="Petrovsky N."/>
            <person name="Piazza S."/>
            <person name="Reed J."/>
            <person name="Reid J.F."/>
            <person name="Ring B.Z."/>
            <person name="Ringwald M."/>
            <person name="Rost B."/>
            <person name="Ruan Y."/>
            <person name="Salzberg S.L."/>
            <person name="Sandelin A."/>
            <person name="Schneider C."/>
            <person name="Schoenbach C."/>
            <person name="Sekiguchi K."/>
            <person name="Semple C.A."/>
            <person name="Seno S."/>
            <person name="Sessa L."/>
            <person name="Sheng Y."/>
            <person name="Shibata Y."/>
            <person name="Shimada H."/>
            <person name="Shimada K."/>
            <person name="Silva D."/>
            <person name="Sinclair B."/>
            <person name="Sperling S."/>
            <person name="Stupka E."/>
            <person name="Sugiura K."/>
            <person name="Sultana R."/>
            <person name="Takenaka Y."/>
            <person name="Taki K."/>
            <person name="Tammoja K."/>
            <person name="Tan S.L."/>
            <person name="Tang S."/>
            <person name="Taylor M.S."/>
            <person name="Tegner J."/>
            <person name="Teichmann S.A."/>
            <person name="Ueda H.R."/>
            <person name="van Nimwegen E."/>
            <person name="Verardo R."/>
            <person name="Wei C.L."/>
            <person name="Yagi K."/>
            <person name="Yamanishi H."/>
            <person name="Zabarovsky E."/>
            <person name="Zhu S."/>
            <person name="Zimmer A."/>
            <person name="Hide W."/>
            <person name="Bult C."/>
            <person name="Grimmond S.M."/>
            <person name="Teasdale R.D."/>
            <person name="Liu E.T."/>
            <person name="Brusic V."/>
            <person name="Quackenbush J."/>
            <person name="Wahlestedt C."/>
            <person name="Mattick J.S."/>
            <person name="Hume D.A."/>
            <person name="Kai C."/>
            <person name="Sasaki D."/>
            <person name="Tomaru Y."/>
            <person name="Fukuda S."/>
            <person name="Kanamori-Katayama M."/>
            <person name="Suzuki M."/>
            <person name="Aoki J."/>
            <person name="Arakawa T."/>
            <person name="Iida J."/>
            <person name="Imamura K."/>
            <person name="Itoh M."/>
            <person name="Kato T."/>
            <person name="Kawaji H."/>
            <person name="Kawagashira N."/>
            <person name="Kawashima T."/>
            <person name="Kojima M."/>
            <person name="Kondo S."/>
            <person name="Konno H."/>
            <person name="Nakano K."/>
            <person name="Ninomiya N."/>
            <person name="Nishio T."/>
            <person name="Okada M."/>
            <person name="Plessy C."/>
            <person name="Shibata K."/>
            <person name="Shiraki T."/>
            <person name="Suzuki S."/>
            <person name="Tagami M."/>
            <person name="Waki K."/>
            <person name="Watahiki A."/>
            <person name="Okamura-Oho Y."/>
            <person name="Suzuki H."/>
            <person name="Kawai J."/>
            <person name="Hayashizaki Y."/>
        </authorList>
    </citation>
    <scope>NUCLEOTIDE SEQUENCE [LARGE SCALE MRNA]</scope>
    <source>
        <strain>NOD</strain>
        <tissue>Thymus</tissue>
    </source>
</reference>
<reference key="3">
    <citation type="journal article" date="2004" name="Genome Res.">
        <title>The status, quality, and expansion of the NIH full-length cDNA project: the Mammalian Gene Collection (MGC).</title>
        <authorList>
            <consortium name="The MGC Project Team"/>
        </authorList>
    </citation>
    <scope>NUCLEOTIDE SEQUENCE [LARGE SCALE MRNA]</scope>
</reference>
<reference key="4">
    <citation type="submission" date="2009-01" db="UniProtKB">
        <authorList>
            <person name="Lubec G."/>
            <person name="Sunyer B."/>
            <person name="Chen W.-Q."/>
        </authorList>
    </citation>
    <scope>PROTEIN SEQUENCE OF 2-17; 27-56; 59-66; 75-83; 123-134; 138-173; 176-198; 205-223; 251-262; 314-324; 330-352; 355-362; 371-402; 464-473; 488-495; 505-517; 521-532; 543-553; 658-679; 687-702; 706-733; 747-772; 776-784; 805-819; 833-848 AND 855-889</scope>
    <scope>IDENTIFICATION BY MASS SPECTROMETRY</scope>
    <source>
        <strain>OF1</strain>
        <tissue>Hippocampus</tissue>
    </source>
</reference>
<reference key="5">
    <citation type="journal article" date="2005" name="J. Biol. Chem.">
        <title>Disruption of the mthfd1 gene reveals a monofunctional 10-formyltetrahydrofolate synthetase in mammalian mitochondria.</title>
        <authorList>
            <person name="Christensen K.E."/>
            <person name="Patel H."/>
            <person name="Kuzmanov U."/>
            <person name="Mejia N.R."/>
            <person name="MacKenzie R.E."/>
        </authorList>
    </citation>
    <scope>FUNCTION</scope>
    <scope>CATALYTIC ACTIVITY</scope>
    <scope>PATHWAY</scope>
    <scope>SUBCELLULAR LOCATION</scope>
</reference>
<reference key="6">
    <citation type="journal article" date="2010" name="Cell">
        <title>A tissue-specific atlas of mouse protein phosphorylation and expression.</title>
        <authorList>
            <person name="Huttlin E.L."/>
            <person name="Jedrychowski M.P."/>
            <person name="Elias J.E."/>
            <person name="Goswami T."/>
            <person name="Rad R."/>
            <person name="Beausoleil S.A."/>
            <person name="Villen J."/>
            <person name="Haas W."/>
            <person name="Sowa M.E."/>
            <person name="Gygi S.P."/>
        </authorList>
    </citation>
    <scope>IDENTIFICATION BY MASS SPECTROMETRY [LARGE SCALE ANALYSIS]</scope>
    <source>
        <tissue>Brain</tissue>
        <tissue>Brown adipose tissue</tissue>
        <tissue>Heart</tissue>
        <tissue>Kidney</tissue>
        <tissue>Liver</tissue>
        <tissue>Lung</tissue>
        <tissue>Pancreas</tissue>
        <tissue>Spleen</tissue>
        <tissue>Testis</tissue>
    </source>
</reference>
<organism>
    <name type="scientific">Mus musculus</name>
    <name type="common">Mouse</name>
    <dbReference type="NCBI Taxonomy" id="10090"/>
    <lineage>
        <taxon>Eukaryota</taxon>
        <taxon>Metazoa</taxon>
        <taxon>Chordata</taxon>
        <taxon>Craniata</taxon>
        <taxon>Vertebrata</taxon>
        <taxon>Euteleostomi</taxon>
        <taxon>Mammalia</taxon>
        <taxon>Eutheria</taxon>
        <taxon>Euarchontoglires</taxon>
        <taxon>Glires</taxon>
        <taxon>Rodentia</taxon>
        <taxon>Myomorpha</taxon>
        <taxon>Muroidea</taxon>
        <taxon>Muridae</taxon>
        <taxon>Murinae</taxon>
        <taxon>Mus</taxon>
        <taxon>Mus</taxon>
    </lineage>
</organism>
<accession>Q922D8</accession>
<accession>Q8R013</accession>
<evidence type="ECO:0000250" key="1"/>
<evidence type="ECO:0000250" key="2">
    <source>
        <dbReference type="UniProtKB" id="P11586"/>
    </source>
</evidence>
<evidence type="ECO:0000269" key="3">
    <source>
    </source>
</evidence>
<evidence type="ECO:0000305" key="4"/>
<evidence type="ECO:0000305" key="5">
    <source>
    </source>
</evidence>
<sequence length="935" mass="101200">MAPAGILNGKLVSAQIRDRLKNQVTRMQEQVPGFTPGLAILQVGDRDDSNLYINVKLKAAEEIGIKATHIKLPRTSTESEVLKYVISLNEDASVHGFIVQLPLDSENSINTEAVINAIAPEKDVDGLTSVSAGKLARGDLNDCFIPCTPKGCLELIKEAGVQIAGRHAVVVGRSKIVGAPMHDLLLWNNATVTTCHSKTANLDKEVNKGDILVVATGQPEMVKGEWIKPGAVVIDCGINYVPDDTKPNGRKVVGDVAYDEAKERASFITPVPGGVGPMTVAMLMQSTVESAQRFLQKFKPGKWTIQYNKLNLKTPVPSDIAISRSCKPKLIGNLAREIGLLTEEVELYGETKAKVLLSALDRLKHQPDGKYVVVTGITPTPLGEGKSTTTIGLVQALGAHLRQNVFACVRQPSQGPTFGIKGGAAGGGYSQVIPMEEFNLHLTGDIHAITAANNLVAAAIDARIFHELTQTDKALFNRLVPSVNGIRKFSDIQIRRLRRLGIEKTDPTTLTDDEINRFARLDIDPETITWQRVLDTNDRFLRKITIGQSPTEKGHTRTAQFDISVASEIMAVLALTSSLEDMRERLGRMVVASSKKGEPISCEDLGVSGALTVLMKDAIKPNLMQTLEGTPVFVHAGPFANIAHGNSSIIADRIALKLVGPEGFVVTEAGFGADIGMEKFFNIKCRYSGLQPHVVVLVATVRALKMHGGGPTVTAGLPLPKAYTEEDLDLVEKGFSNLRKQIENARMFGVPVVVAVNVFKTDTDAELDLVSRLSREHGAFDAVKCTHWAEGGQGALALAQAVQRASQAPSSFQLLYDLKLSIEDKIRIIAQRIYGADDIELLPEAQNKAEIYTKQGFGNLPICMAKTHLSLSHNPEQKGVPTGFVLPIRDIRASVGAGFLYPLVGTMSTMPGLPTRPCFYDIDLDPETEQVNGLF</sequence>